<comment type="function">
    <text evidence="1">Required for rescue of stalled ribosomes mediated by trans-translation. Binds to transfer-messenger RNA (tmRNA), required for stable association of tmRNA with ribosomes. tmRNA and SmpB together mimic tRNA shape, replacing the anticodon stem-loop with SmpB. tmRNA is encoded by the ssrA gene; the 2 termini fold to resemble tRNA(Ala) and it encodes a 'tag peptide', a short internal open reading frame. During trans-translation Ala-aminoacylated tmRNA acts like a tRNA, entering the A-site of stalled ribosomes, displacing the stalled mRNA. The ribosome then switches to translate the ORF on the tmRNA; the nascent peptide is terminated with the 'tag peptide' encoded by the tmRNA and targeted for degradation. The ribosome is freed to recommence translation, which seems to be the essential function of trans-translation.</text>
</comment>
<comment type="subcellular location">
    <subcellularLocation>
        <location evidence="1">Cytoplasm</location>
    </subcellularLocation>
    <text evidence="1">The tmRNA-SmpB complex associates with stalled 70S ribosomes.</text>
</comment>
<comment type="similarity">
    <text evidence="1">Belongs to the SmpB family.</text>
</comment>
<organism>
    <name type="scientific">Xanthomonas oryzae pv. oryzae (strain PXO99A)</name>
    <dbReference type="NCBI Taxonomy" id="360094"/>
    <lineage>
        <taxon>Bacteria</taxon>
        <taxon>Pseudomonadati</taxon>
        <taxon>Pseudomonadota</taxon>
        <taxon>Gammaproteobacteria</taxon>
        <taxon>Lysobacterales</taxon>
        <taxon>Lysobacteraceae</taxon>
        <taxon>Xanthomonas</taxon>
    </lineage>
</organism>
<sequence>MSKKPTKDKANGAKATKTIALNKRARHEYHLEERYEAGLALQGWEIKAIRAGRANIVDGYAYVRSGEIYLIGAQITPLIQASTHTVPVERRDRKLLLHRAEIDKVLTRVEREGYTLVPTALYWSSNKVKLEIALAKGKQNHDKRDAAKERDWQRDKQRVMRRHNRDA</sequence>
<accession>B2SQV2</accession>
<keyword id="KW-0963">Cytoplasm</keyword>
<keyword id="KW-0694">RNA-binding</keyword>
<reference key="1">
    <citation type="journal article" date="2008" name="BMC Genomics">
        <title>Genome sequence and rapid evolution of the rice pathogen Xanthomonas oryzae pv. oryzae PXO99A.</title>
        <authorList>
            <person name="Salzberg S.L."/>
            <person name="Sommer D.D."/>
            <person name="Schatz M.C."/>
            <person name="Phillippy A.M."/>
            <person name="Rabinowicz P.D."/>
            <person name="Tsuge S."/>
            <person name="Furutani A."/>
            <person name="Ochiai H."/>
            <person name="Delcher A.L."/>
            <person name="Kelley D."/>
            <person name="Madupu R."/>
            <person name="Puiu D."/>
            <person name="Radune D."/>
            <person name="Shumway M."/>
            <person name="Trapnell C."/>
            <person name="Aparna G."/>
            <person name="Jha G."/>
            <person name="Pandey A."/>
            <person name="Patil P.B."/>
            <person name="Ishihara H."/>
            <person name="Meyer D.F."/>
            <person name="Szurek B."/>
            <person name="Verdier V."/>
            <person name="Koebnik R."/>
            <person name="Dow J.M."/>
            <person name="Ryan R.P."/>
            <person name="Hirata H."/>
            <person name="Tsuyumu S."/>
            <person name="Won Lee S."/>
            <person name="Seo Y.-S."/>
            <person name="Sriariyanum M."/>
            <person name="Ronald P.C."/>
            <person name="Sonti R.V."/>
            <person name="Van Sluys M.-A."/>
            <person name="Leach J.E."/>
            <person name="White F.F."/>
            <person name="Bogdanove A.J."/>
        </authorList>
    </citation>
    <scope>NUCLEOTIDE SEQUENCE [LARGE SCALE GENOMIC DNA]</scope>
    <source>
        <strain>PXO99A</strain>
    </source>
</reference>
<dbReference type="EMBL" id="CP000967">
    <property type="protein sequence ID" value="ACD59513.1"/>
    <property type="molecule type" value="Genomic_DNA"/>
</dbReference>
<dbReference type="RefSeq" id="WP_011258734.1">
    <property type="nucleotide sequence ID" value="NC_010717.2"/>
</dbReference>
<dbReference type="SMR" id="B2SQV2"/>
<dbReference type="KEGG" id="xop:PXO_01177"/>
<dbReference type="eggNOG" id="COG0691">
    <property type="taxonomic scope" value="Bacteria"/>
</dbReference>
<dbReference type="HOGENOM" id="CLU_108953_3_0_6"/>
<dbReference type="Proteomes" id="UP000001740">
    <property type="component" value="Chromosome"/>
</dbReference>
<dbReference type="GO" id="GO:0005829">
    <property type="term" value="C:cytosol"/>
    <property type="evidence" value="ECO:0007669"/>
    <property type="project" value="TreeGrafter"/>
</dbReference>
<dbReference type="GO" id="GO:0003723">
    <property type="term" value="F:RNA binding"/>
    <property type="evidence" value="ECO:0007669"/>
    <property type="project" value="UniProtKB-UniRule"/>
</dbReference>
<dbReference type="GO" id="GO:0070929">
    <property type="term" value="P:trans-translation"/>
    <property type="evidence" value="ECO:0007669"/>
    <property type="project" value="UniProtKB-UniRule"/>
</dbReference>
<dbReference type="CDD" id="cd09294">
    <property type="entry name" value="SmpB"/>
    <property type="match status" value="1"/>
</dbReference>
<dbReference type="Gene3D" id="2.40.280.10">
    <property type="match status" value="1"/>
</dbReference>
<dbReference type="HAMAP" id="MF_00023">
    <property type="entry name" value="SmpB"/>
    <property type="match status" value="1"/>
</dbReference>
<dbReference type="InterPro" id="IPR023620">
    <property type="entry name" value="SmpB"/>
</dbReference>
<dbReference type="InterPro" id="IPR000037">
    <property type="entry name" value="SsrA-bd_prot"/>
</dbReference>
<dbReference type="InterPro" id="IPR020081">
    <property type="entry name" value="SsrA-bd_prot_CS"/>
</dbReference>
<dbReference type="NCBIfam" id="NF003843">
    <property type="entry name" value="PRK05422.1"/>
    <property type="match status" value="1"/>
</dbReference>
<dbReference type="NCBIfam" id="TIGR00086">
    <property type="entry name" value="smpB"/>
    <property type="match status" value="1"/>
</dbReference>
<dbReference type="PANTHER" id="PTHR30308:SF2">
    <property type="entry name" value="SSRA-BINDING PROTEIN"/>
    <property type="match status" value="1"/>
</dbReference>
<dbReference type="PANTHER" id="PTHR30308">
    <property type="entry name" value="TMRNA-BINDING COMPONENT OF TRANS-TRANSLATION TAGGING COMPLEX"/>
    <property type="match status" value="1"/>
</dbReference>
<dbReference type="Pfam" id="PF01668">
    <property type="entry name" value="SmpB"/>
    <property type="match status" value="1"/>
</dbReference>
<dbReference type="SUPFAM" id="SSF74982">
    <property type="entry name" value="Small protein B (SmpB)"/>
    <property type="match status" value="1"/>
</dbReference>
<dbReference type="PROSITE" id="PS01317">
    <property type="entry name" value="SSRP"/>
    <property type="match status" value="1"/>
</dbReference>
<feature type="chain" id="PRO_1000090201" description="SsrA-binding protein">
    <location>
        <begin position="1"/>
        <end position="167"/>
    </location>
</feature>
<feature type="region of interest" description="Disordered" evidence="2">
    <location>
        <begin position="139"/>
        <end position="167"/>
    </location>
</feature>
<feature type="compositionally biased region" description="Basic and acidic residues" evidence="2">
    <location>
        <begin position="139"/>
        <end position="158"/>
    </location>
</feature>
<protein>
    <recommendedName>
        <fullName evidence="1">SsrA-binding protein</fullName>
    </recommendedName>
    <alternativeName>
        <fullName evidence="1">Small protein B</fullName>
    </alternativeName>
</protein>
<proteinExistence type="inferred from homology"/>
<evidence type="ECO:0000255" key="1">
    <source>
        <dbReference type="HAMAP-Rule" id="MF_00023"/>
    </source>
</evidence>
<evidence type="ECO:0000256" key="2">
    <source>
        <dbReference type="SAM" id="MobiDB-lite"/>
    </source>
</evidence>
<gene>
    <name evidence="1" type="primary">smpB</name>
    <name type="ordered locus">PXO_01177</name>
</gene>
<name>SSRP_XANOP</name>